<accession>Q3M7E8</accession>
<feature type="chain" id="PRO_1000020014" description="Methionyl-tRNA formyltransferase">
    <location>
        <begin position="1"/>
        <end position="334"/>
    </location>
</feature>
<feature type="binding site" evidence="1">
    <location>
        <begin position="111"/>
        <end position="114"/>
    </location>
    <ligand>
        <name>(6S)-5,6,7,8-tetrahydrofolate</name>
        <dbReference type="ChEBI" id="CHEBI:57453"/>
    </ligand>
</feature>
<evidence type="ECO:0000255" key="1">
    <source>
        <dbReference type="HAMAP-Rule" id="MF_00182"/>
    </source>
</evidence>
<comment type="function">
    <text evidence="1">Attaches a formyl group to the free amino group of methionyl-tRNA(fMet). The formyl group appears to play a dual role in the initiator identity of N-formylmethionyl-tRNA by promoting its recognition by IF2 and preventing the misappropriation of this tRNA by the elongation apparatus.</text>
</comment>
<comment type="catalytic activity">
    <reaction evidence="1">
        <text>L-methionyl-tRNA(fMet) + (6R)-10-formyltetrahydrofolate = N-formyl-L-methionyl-tRNA(fMet) + (6S)-5,6,7,8-tetrahydrofolate + H(+)</text>
        <dbReference type="Rhea" id="RHEA:24380"/>
        <dbReference type="Rhea" id="RHEA-COMP:9952"/>
        <dbReference type="Rhea" id="RHEA-COMP:9953"/>
        <dbReference type="ChEBI" id="CHEBI:15378"/>
        <dbReference type="ChEBI" id="CHEBI:57453"/>
        <dbReference type="ChEBI" id="CHEBI:78530"/>
        <dbReference type="ChEBI" id="CHEBI:78844"/>
        <dbReference type="ChEBI" id="CHEBI:195366"/>
        <dbReference type="EC" id="2.1.2.9"/>
    </reaction>
</comment>
<comment type="similarity">
    <text evidence="1">Belongs to the Fmt family.</text>
</comment>
<gene>
    <name evidence="1" type="primary">fmt</name>
    <name type="ordered locus">Ava_3481</name>
</gene>
<reference key="1">
    <citation type="journal article" date="2014" name="Stand. Genomic Sci.">
        <title>Complete genome sequence of Anabaena variabilis ATCC 29413.</title>
        <authorList>
            <person name="Thiel T."/>
            <person name="Pratte B.S."/>
            <person name="Zhong J."/>
            <person name="Goodwin L."/>
            <person name="Copeland A."/>
            <person name="Lucas S."/>
            <person name="Han C."/>
            <person name="Pitluck S."/>
            <person name="Land M.L."/>
            <person name="Kyrpides N.C."/>
            <person name="Woyke T."/>
        </authorList>
    </citation>
    <scope>NUCLEOTIDE SEQUENCE [LARGE SCALE GENOMIC DNA]</scope>
    <source>
        <strain>ATCC 29413 / PCC 7937</strain>
    </source>
</reference>
<dbReference type="EC" id="2.1.2.9" evidence="1"/>
<dbReference type="EMBL" id="CP000117">
    <property type="protein sequence ID" value="ABA23088.1"/>
    <property type="molecule type" value="Genomic_DNA"/>
</dbReference>
<dbReference type="SMR" id="Q3M7E8"/>
<dbReference type="STRING" id="240292.Ava_3481"/>
<dbReference type="KEGG" id="ava:Ava_3481"/>
<dbReference type="eggNOG" id="COG0223">
    <property type="taxonomic scope" value="Bacteria"/>
</dbReference>
<dbReference type="HOGENOM" id="CLU_033347_1_1_3"/>
<dbReference type="Proteomes" id="UP000002533">
    <property type="component" value="Chromosome"/>
</dbReference>
<dbReference type="GO" id="GO:0005829">
    <property type="term" value="C:cytosol"/>
    <property type="evidence" value="ECO:0007669"/>
    <property type="project" value="TreeGrafter"/>
</dbReference>
<dbReference type="GO" id="GO:0004479">
    <property type="term" value="F:methionyl-tRNA formyltransferase activity"/>
    <property type="evidence" value="ECO:0007669"/>
    <property type="project" value="UniProtKB-UniRule"/>
</dbReference>
<dbReference type="CDD" id="cd08646">
    <property type="entry name" value="FMT_core_Met-tRNA-FMT_N"/>
    <property type="match status" value="1"/>
</dbReference>
<dbReference type="CDD" id="cd08704">
    <property type="entry name" value="Met_tRNA_FMT_C"/>
    <property type="match status" value="1"/>
</dbReference>
<dbReference type="FunFam" id="3.40.50.12230:FF:000001">
    <property type="entry name" value="Methionyl-tRNA formyltransferase"/>
    <property type="match status" value="1"/>
</dbReference>
<dbReference type="Gene3D" id="3.40.50.12230">
    <property type="match status" value="1"/>
</dbReference>
<dbReference type="HAMAP" id="MF_00182">
    <property type="entry name" value="Formyl_trans"/>
    <property type="match status" value="1"/>
</dbReference>
<dbReference type="InterPro" id="IPR005794">
    <property type="entry name" value="Fmt"/>
</dbReference>
<dbReference type="InterPro" id="IPR005793">
    <property type="entry name" value="Formyl_trans_C"/>
</dbReference>
<dbReference type="InterPro" id="IPR002376">
    <property type="entry name" value="Formyl_transf_N"/>
</dbReference>
<dbReference type="InterPro" id="IPR036477">
    <property type="entry name" value="Formyl_transf_N_sf"/>
</dbReference>
<dbReference type="InterPro" id="IPR011034">
    <property type="entry name" value="Formyl_transferase-like_C_sf"/>
</dbReference>
<dbReference type="InterPro" id="IPR001555">
    <property type="entry name" value="GART_AS"/>
</dbReference>
<dbReference type="InterPro" id="IPR044135">
    <property type="entry name" value="Met-tRNA-FMT_C"/>
</dbReference>
<dbReference type="InterPro" id="IPR041711">
    <property type="entry name" value="Met-tRNA-FMT_N"/>
</dbReference>
<dbReference type="NCBIfam" id="TIGR00460">
    <property type="entry name" value="fmt"/>
    <property type="match status" value="1"/>
</dbReference>
<dbReference type="PANTHER" id="PTHR11138">
    <property type="entry name" value="METHIONYL-TRNA FORMYLTRANSFERASE"/>
    <property type="match status" value="1"/>
</dbReference>
<dbReference type="PANTHER" id="PTHR11138:SF5">
    <property type="entry name" value="METHIONYL-TRNA FORMYLTRANSFERASE, MITOCHONDRIAL"/>
    <property type="match status" value="1"/>
</dbReference>
<dbReference type="Pfam" id="PF02911">
    <property type="entry name" value="Formyl_trans_C"/>
    <property type="match status" value="1"/>
</dbReference>
<dbReference type="Pfam" id="PF00551">
    <property type="entry name" value="Formyl_trans_N"/>
    <property type="match status" value="1"/>
</dbReference>
<dbReference type="SUPFAM" id="SSF50486">
    <property type="entry name" value="FMT C-terminal domain-like"/>
    <property type="match status" value="1"/>
</dbReference>
<dbReference type="SUPFAM" id="SSF53328">
    <property type="entry name" value="Formyltransferase"/>
    <property type="match status" value="1"/>
</dbReference>
<dbReference type="PROSITE" id="PS00373">
    <property type="entry name" value="GART"/>
    <property type="match status" value="1"/>
</dbReference>
<proteinExistence type="inferred from homology"/>
<name>FMT_TRIV2</name>
<keyword id="KW-0648">Protein biosynthesis</keyword>
<keyword id="KW-0808">Transferase</keyword>
<organism>
    <name type="scientific">Trichormus variabilis (strain ATCC 29413 / PCC 7937)</name>
    <name type="common">Anabaena variabilis</name>
    <dbReference type="NCBI Taxonomy" id="240292"/>
    <lineage>
        <taxon>Bacteria</taxon>
        <taxon>Bacillati</taxon>
        <taxon>Cyanobacteriota</taxon>
        <taxon>Cyanophyceae</taxon>
        <taxon>Nostocales</taxon>
        <taxon>Nostocaceae</taxon>
        <taxon>Trichormus</taxon>
    </lineage>
</organism>
<sequence>MKIVFFGTPEFAVPTLEKLLLNQEFEVLAVVTQPDKRRERGNKLTPSPVKNMAIAHDLPVWQPERIKKDTETLNKLKQLDADAFVVVAYGQILSQKILDMPKLGCVNVHGSILPQYRGAAPIQWCLYNGETETGITTMLMDAGMDTGAMLLKATTPIGLLDNADDVAQRLSVIGGDLLIETLYKLQQQEIQPIPQDNAAATYASLIQKQDYGLDWSRSALQLHNQIRGFYPNCTTTFRNQPLKITASFPLGAAYNDELPPELQKMLQKLPDLSQISGSPGEVVSITKGVGAIAQTGEGLLLLREVQLPGKRPQSGWDFVNGTRLTVGEVLGNGS</sequence>
<protein>
    <recommendedName>
        <fullName evidence="1">Methionyl-tRNA formyltransferase</fullName>
        <ecNumber evidence="1">2.1.2.9</ecNumber>
    </recommendedName>
</protein>